<dbReference type="EMBL" id="KB030659">
    <property type="protein sequence ID" value="ELK12734.1"/>
    <property type="molecule type" value="Genomic_DNA"/>
</dbReference>
<dbReference type="RefSeq" id="XP_006911850.1">
    <property type="nucleotide sequence ID" value="XM_006911788.3"/>
</dbReference>
<dbReference type="RefSeq" id="XP_015444823.1">
    <property type="nucleotide sequence ID" value="XM_015589337.2"/>
</dbReference>
<dbReference type="SMR" id="L5KM50"/>
<dbReference type="FunCoup" id="L5KM50">
    <property type="interactions" value="216"/>
</dbReference>
<dbReference type="STRING" id="9402.L5KM50"/>
<dbReference type="GeneID" id="102889566"/>
<dbReference type="KEGG" id="pale:102889566"/>
<dbReference type="CTD" id="348"/>
<dbReference type="eggNOG" id="ENOG502QVD6">
    <property type="taxonomic scope" value="Eukaryota"/>
</dbReference>
<dbReference type="InParanoid" id="L5KM50"/>
<dbReference type="OrthoDB" id="14460at314145"/>
<dbReference type="Proteomes" id="UP000010552">
    <property type="component" value="Unassembled WGS sequence"/>
</dbReference>
<dbReference type="GO" id="GO:0042627">
    <property type="term" value="C:chylomicron"/>
    <property type="evidence" value="ECO:0007669"/>
    <property type="project" value="UniProtKB-KW"/>
</dbReference>
<dbReference type="GO" id="GO:0070062">
    <property type="term" value="C:extracellular exosome"/>
    <property type="evidence" value="ECO:0000250"/>
    <property type="project" value="UniProtKB"/>
</dbReference>
<dbReference type="GO" id="GO:0034364">
    <property type="term" value="C:high-density lipoprotein particle"/>
    <property type="evidence" value="ECO:0007669"/>
    <property type="project" value="UniProtKB-KW"/>
</dbReference>
<dbReference type="GO" id="GO:0034362">
    <property type="term" value="C:low-density lipoprotein particle"/>
    <property type="evidence" value="ECO:0007669"/>
    <property type="project" value="TreeGrafter"/>
</dbReference>
<dbReference type="GO" id="GO:0097487">
    <property type="term" value="C:multivesicular body, internal vesicle"/>
    <property type="evidence" value="ECO:0000250"/>
    <property type="project" value="UniProtKB"/>
</dbReference>
<dbReference type="GO" id="GO:0034361">
    <property type="term" value="C:very-low-density lipoprotein particle"/>
    <property type="evidence" value="ECO:0007669"/>
    <property type="project" value="UniProtKB-KW"/>
</dbReference>
<dbReference type="GO" id="GO:0120020">
    <property type="term" value="F:cholesterol transfer activity"/>
    <property type="evidence" value="ECO:0007669"/>
    <property type="project" value="TreeGrafter"/>
</dbReference>
<dbReference type="GO" id="GO:0008201">
    <property type="term" value="F:heparin binding"/>
    <property type="evidence" value="ECO:0007669"/>
    <property type="project" value="UniProtKB-KW"/>
</dbReference>
<dbReference type="GO" id="GO:0060228">
    <property type="term" value="F:phosphatidylcholine-sterol O-acyltransferase activator activity"/>
    <property type="evidence" value="ECO:0007669"/>
    <property type="project" value="TreeGrafter"/>
</dbReference>
<dbReference type="GO" id="GO:0005543">
    <property type="term" value="F:phospholipid binding"/>
    <property type="evidence" value="ECO:0007669"/>
    <property type="project" value="TreeGrafter"/>
</dbReference>
<dbReference type="GO" id="GO:0055090">
    <property type="term" value="P:acylglycerol homeostasis"/>
    <property type="evidence" value="ECO:0007669"/>
    <property type="project" value="TreeGrafter"/>
</dbReference>
<dbReference type="GO" id="GO:0033344">
    <property type="term" value="P:cholesterol efflux"/>
    <property type="evidence" value="ECO:0007669"/>
    <property type="project" value="TreeGrafter"/>
</dbReference>
<dbReference type="GO" id="GO:0008203">
    <property type="term" value="P:cholesterol metabolic process"/>
    <property type="evidence" value="ECO:0007669"/>
    <property type="project" value="TreeGrafter"/>
</dbReference>
<dbReference type="GO" id="GO:0042157">
    <property type="term" value="P:lipoprotein metabolic process"/>
    <property type="evidence" value="ECO:0007669"/>
    <property type="project" value="InterPro"/>
</dbReference>
<dbReference type="GO" id="GO:0032438">
    <property type="term" value="P:melanosome organization"/>
    <property type="evidence" value="ECO:0000250"/>
    <property type="project" value="UniProtKB"/>
</dbReference>
<dbReference type="GO" id="GO:0033700">
    <property type="term" value="P:phospholipid efflux"/>
    <property type="evidence" value="ECO:0007669"/>
    <property type="project" value="TreeGrafter"/>
</dbReference>
<dbReference type="FunFam" id="1.20.120.20:FF:000002">
    <property type="entry name" value="Apolipoprotein E"/>
    <property type="match status" value="1"/>
</dbReference>
<dbReference type="FunFam" id="1.20.120.20:FF:000003">
    <property type="entry name" value="Apolipoprotein E"/>
    <property type="match status" value="1"/>
</dbReference>
<dbReference type="Gene3D" id="1.20.120.20">
    <property type="entry name" value="Apolipoprotein"/>
    <property type="match status" value="2"/>
</dbReference>
<dbReference type="InterPro" id="IPR000074">
    <property type="entry name" value="ApoA_E"/>
</dbReference>
<dbReference type="InterPro" id="IPR050163">
    <property type="entry name" value="Apolipoprotein_A1/A4/E"/>
</dbReference>
<dbReference type="PANTHER" id="PTHR18976">
    <property type="entry name" value="APOLIPOPROTEIN"/>
    <property type="match status" value="1"/>
</dbReference>
<dbReference type="PANTHER" id="PTHR18976:SF2">
    <property type="entry name" value="APOLIPOPROTEIN E"/>
    <property type="match status" value="1"/>
</dbReference>
<dbReference type="Pfam" id="PF01442">
    <property type="entry name" value="Apolipoprotein"/>
    <property type="match status" value="1"/>
</dbReference>
<dbReference type="SUPFAM" id="SSF58113">
    <property type="entry name" value="Apolipoprotein A-I"/>
    <property type="match status" value="1"/>
</dbReference>
<proteinExistence type="inferred from homology"/>
<gene>
    <name type="primary">APOE</name>
</gene>
<name>APOE_PTEAL</name>
<sequence>MKFLWAALVVTLLAGCQADVEEEVKLGQEPDRWQAKQPWEQALGRFWEYLRWVQTLSNKVKEELLNSQVTEELKLLIEETMKEVKAYKEELEKQVGPIAQETQARLSKELQAAQARLESDMEDVRTRLAQYRSEAQAALGQNTDDLQGRLASHLRKLRKRLLRDAEDLQKRLAVYQAGTHEAAERGVSAIHERLGPLMMEGPLQAIPPSQQLRERAEAWGQKVRGRLESVGSQARDRLDDVRDQMEELKAKVEEQASQVRLQAEAFQTRLKSWFEPLVQDMQRQWASLVEKVQSSLGISPSTKPSKTK</sequence>
<keyword id="KW-0162">Chylomicron</keyword>
<keyword id="KW-0967">Endosome</keyword>
<keyword id="KW-0272">Extracellular matrix</keyword>
<keyword id="KW-0325">Glycoprotein</keyword>
<keyword id="KW-0345">HDL</keyword>
<keyword id="KW-0358">Heparin-binding</keyword>
<keyword id="KW-0445">Lipid transport</keyword>
<keyword id="KW-0446">Lipid-binding</keyword>
<keyword id="KW-0558">Oxidation</keyword>
<keyword id="KW-0597">Phosphoprotein</keyword>
<keyword id="KW-1185">Reference proteome</keyword>
<keyword id="KW-0677">Repeat</keyword>
<keyword id="KW-0964">Secreted</keyword>
<keyword id="KW-0732">Signal</keyword>
<keyword id="KW-0813">Transport</keyword>
<keyword id="KW-0850">VLDL</keyword>
<feature type="signal peptide" evidence="2">
    <location>
        <begin position="1"/>
        <end position="18"/>
    </location>
</feature>
<feature type="chain" id="PRO_5003969348" description="Apolipoprotein E">
    <location>
        <begin position="19"/>
        <end position="308"/>
    </location>
</feature>
<feature type="repeat" description="1">
    <location>
        <begin position="75"/>
        <end position="96"/>
    </location>
</feature>
<feature type="repeat" description="2">
    <location>
        <begin position="97"/>
        <end position="118"/>
    </location>
</feature>
<feature type="repeat" description="3">
    <location>
        <begin position="119"/>
        <end position="140"/>
    </location>
</feature>
<feature type="repeat" description="4">
    <location>
        <begin position="141"/>
        <end position="162"/>
    </location>
</feature>
<feature type="repeat" description="5">
    <location>
        <begin position="163"/>
        <end position="184"/>
    </location>
</feature>
<feature type="repeat" description="6">
    <location>
        <begin position="185"/>
        <end position="206"/>
    </location>
</feature>
<feature type="repeat" description="7">
    <location>
        <begin position="207"/>
        <end position="224"/>
    </location>
</feature>
<feature type="repeat" description="8">
    <location>
        <begin position="225"/>
        <end position="246"/>
    </location>
</feature>
<feature type="region of interest" description="8 X 22 AA approximate tandem repeats">
    <location>
        <begin position="75"/>
        <end position="246"/>
    </location>
</feature>
<feature type="region of interest" description="LDL and other lipoprotein receptors binding" evidence="1">
    <location>
        <begin position="153"/>
        <end position="163"/>
    </location>
</feature>
<feature type="region of interest" description="Lipid-binding and lipoprotein association" evidence="1">
    <location>
        <begin position="205"/>
        <end position="281"/>
    </location>
</feature>
<feature type="region of interest" description="Homooligomerization" evidence="1">
    <location>
        <begin position="257"/>
        <end position="308"/>
    </location>
</feature>
<feature type="region of interest" description="Specificity for association with VLDL" evidence="1">
    <location>
        <begin position="269"/>
        <end position="281"/>
    </location>
</feature>
<feature type="binding site" evidence="1">
    <location>
        <begin position="157"/>
        <end position="160"/>
    </location>
    <ligand>
        <name>heparin</name>
        <dbReference type="ChEBI" id="CHEBI:28304"/>
    </ligand>
</feature>
<feature type="binding site" evidence="1">
    <location>
        <begin position="220"/>
        <end position="227"/>
    </location>
    <ligand>
        <name>heparin</name>
        <dbReference type="ChEBI" id="CHEBI:28304"/>
    </ligand>
</feature>
<accession>L5KM50</accession>
<reference key="1">
    <citation type="journal article" date="2013" name="Science">
        <title>Comparative analysis of bat genomes provides insight into the evolution of flight and immunity.</title>
        <authorList>
            <person name="Zhang G."/>
            <person name="Cowled C."/>
            <person name="Shi Z."/>
            <person name="Huang Z."/>
            <person name="Bishop-Lilly K.A."/>
            <person name="Fang X."/>
            <person name="Wynne J.W."/>
            <person name="Xiong Z."/>
            <person name="Baker M.L."/>
            <person name="Zhao W."/>
            <person name="Tachedjian M."/>
            <person name="Zhu Y."/>
            <person name="Zhou P."/>
            <person name="Jiang X."/>
            <person name="Ng J."/>
            <person name="Yang L."/>
            <person name="Wu L."/>
            <person name="Xiao J."/>
            <person name="Feng Y."/>
            <person name="Chen Y."/>
            <person name="Sun X."/>
            <person name="Zhang Y."/>
            <person name="Marsh G.A."/>
            <person name="Crameri G."/>
            <person name="Broder C.C."/>
            <person name="Frey K.G."/>
            <person name="Wang L.F."/>
            <person name="Wang J."/>
        </authorList>
    </citation>
    <scope>NUCLEOTIDE SEQUENCE [LARGE SCALE GENOMIC DNA]</scope>
</reference>
<protein>
    <recommendedName>
        <fullName>Apolipoprotein E</fullName>
        <shortName>Apo-E</shortName>
    </recommendedName>
</protein>
<organism>
    <name type="scientific">Pteropus alecto</name>
    <name type="common">Black flying fox</name>
    <dbReference type="NCBI Taxonomy" id="9402"/>
    <lineage>
        <taxon>Eukaryota</taxon>
        <taxon>Metazoa</taxon>
        <taxon>Chordata</taxon>
        <taxon>Craniata</taxon>
        <taxon>Vertebrata</taxon>
        <taxon>Euteleostomi</taxon>
        <taxon>Mammalia</taxon>
        <taxon>Eutheria</taxon>
        <taxon>Laurasiatheria</taxon>
        <taxon>Chiroptera</taxon>
        <taxon>Yinpterochiroptera</taxon>
        <taxon>Pteropodoidea</taxon>
        <taxon>Pteropodidae</taxon>
        <taxon>Pteropodinae</taxon>
        <taxon>Pteropus</taxon>
    </lineage>
</organism>
<comment type="function">
    <text evidence="1">APOE is an apolipoprotein, a protein associating with lipid particles, that mainly functions in lipoprotein-mediated lipid transport between organs via the plasma and interstitial fluids. APOE is a core component of plasma lipoproteins and is involved in their production, conversion and clearance. Apolipoproteins are amphipathic molecules that interact both with lipids of the lipoprotein particle core and the aqueous environment of the plasma. As such, APOE associates with chylomicrons, chylomicron remnants, very low density lipoproteins (VLDL) and intermediate density lipoproteins (IDL) but shows a preferential binding to high-density lipoproteins (HDL). It also binds a wide range of cellular receptors including the LDL receptor/LDLR and the very low-density lipoprotein receptor/VLDLR that mediate the cellular uptake of the APOE-containing lipoprotein particles. Finally, APOE also has a heparin-binding activity and binds heparan-sulfate proteoglycans on the surface of cells, a property that supports the capture and the receptor-mediated uptake of APOE-containing lipoproteins by cells.</text>
</comment>
<comment type="subunit">
    <text evidence="1">Homotetramer. May interact with ABCA1; functionally associated with ABCA1 in the biogenesis of HDLs. May interact with APP/A4 amyloid-beta peptide; the interaction is extremely stable in vitro but its physiological significance is unclear. May interact with MAPT. May interact with MAP2. In the cerebrospinal fluid, interacts with secreted SORL1. Interacts with PMEL; this allows the loading of PMEL luminal fragment on ILVs to induce fibril nucleation.</text>
</comment>
<comment type="subcellular location">
    <subcellularLocation>
        <location evidence="1">Secreted</location>
    </subcellularLocation>
    <subcellularLocation>
        <location evidence="1">Secreted</location>
        <location evidence="1">Extracellular space</location>
    </subcellularLocation>
    <subcellularLocation>
        <location evidence="1">Secreted</location>
        <location evidence="1">Extracellular space</location>
        <location evidence="1">Extracellular matrix</location>
    </subcellularLocation>
    <subcellularLocation>
        <location evidence="1">Extracellular vesicle</location>
    </subcellularLocation>
    <subcellularLocation>
        <location evidence="1">Endosome</location>
        <location evidence="1">Multivesicular body</location>
    </subcellularLocation>
    <text evidence="1">In the plasma, APOE is associated with chylomicrons, chylomicrons remnants, VLDL, LDL and HDL lipoproteins. Lipid poor oligomeric APOE is associated with the extracellular matrix in a calcium- and heparan-sulfate proteoglycans-dependent manner. Lipidation induces the release from the extracellular matrix. Colocalizes with CD63 and PMEL at exosomes and in intraluminal vesicles within multivesicular endosomes.</text>
</comment>
<comment type="PTM">
    <text evidence="1">APOE exists as multiple glycosylated and sialylated glycoforms within cells and in plasma. The extent of glycosylation and sialylation are tissue and context specific.</text>
</comment>
<comment type="PTM">
    <text evidence="1">Glycated in plasma VLDL.</text>
</comment>
<comment type="PTM">
    <text evidence="1">Phosphorylated by FAM20C in the extracellular medium.</text>
</comment>
<comment type="similarity">
    <text evidence="3">Belongs to the apolipoprotein A1/A4/E family.</text>
</comment>
<evidence type="ECO:0000250" key="1">
    <source>
        <dbReference type="UniProtKB" id="P02649"/>
    </source>
</evidence>
<evidence type="ECO:0000255" key="2"/>
<evidence type="ECO:0000305" key="3"/>